<name>PA2AA_CROHD</name>
<reference key="1">
    <citation type="journal article" date="2010" name="Toxicon">
        <title>Absence of phospholipase A(2) in most Crotalus horridus venom due to translation blockage: comparison with Crotalus horridus atricaudatus venom.</title>
        <authorList>
            <person name="Wang Y.-M."/>
            <person name="Parmelee J."/>
            <person name="Guo Y.-W."/>
            <person name="Tsai I.-H."/>
        </authorList>
    </citation>
    <scope>PROTEIN SEQUENCE</scope>
    <scope>FUNCTION</scope>
    <scope>CATALYTIC ACTIVITY</scope>
    <scope>MASS SPECTROMETRY</scope>
    <source>
        <strain>South Carolina</strain>
        <tissue>Venom</tissue>
    </source>
</reference>
<accession>P0DJR1</accession>
<proteinExistence type="evidence at protein level"/>
<protein>
    <recommendedName>
        <fullName>Acidic phospholipase CHA-E6a</fullName>
        <shortName>svPLA2</shortName>
        <ecNumber>3.1.1.4</ecNumber>
    </recommendedName>
    <alternativeName>
        <fullName>Phosphatidylcholine 2-acylhydrolase</fullName>
    </alternativeName>
</protein>
<organism>
    <name type="scientific">Crotalus horridus</name>
    <name type="common">Timber rattlesnake</name>
    <dbReference type="NCBI Taxonomy" id="35024"/>
    <lineage>
        <taxon>Eukaryota</taxon>
        <taxon>Metazoa</taxon>
        <taxon>Chordata</taxon>
        <taxon>Craniata</taxon>
        <taxon>Vertebrata</taxon>
        <taxon>Euteleostomi</taxon>
        <taxon>Lepidosauria</taxon>
        <taxon>Squamata</taxon>
        <taxon>Bifurcata</taxon>
        <taxon>Unidentata</taxon>
        <taxon>Episquamata</taxon>
        <taxon>Toxicofera</taxon>
        <taxon>Serpentes</taxon>
        <taxon>Colubroidea</taxon>
        <taxon>Viperidae</taxon>
        <taxon>Crotalinae</taxon>
        <taxon>Crotalus</taxon>
    </lineage>
</organism>
<evidence type="ECO:0000250" key="1"/>
<evidence type="ECO:0000269" key="2">
    <source>
    </source>
</evidence>
<evidence type="ECO:0000305" key="3"/>
<keyword id="KW-1203">Blood coagulation cascade inhibiting toxin</keyword>
<keyword id="KW-0106">Calcium</keyword>
<keyword id="KW-0903">Direct protein sequencing</keyword>
<keyword id="KW-1015">Disulfide bond</keyword>
<keyword id="KW-1199">Hemostasis impairing toxin</keyword>
<keyword id="KW-0378">Hydrolase</keyword>
<keyword id="KW-0442">Lipid degradation</keyword>
<keyword id="KW-0443">Lipid metabolism</keyword>
<keyword id="KW-0479">Metal-binding</keyword>
<keyword id="KW-1201">Platelet aggregation inhibiting toxin</keyword>
<keyword id="KW-0964">Secreted</keyword>
<keyword id="KW-0800">Toxin</keyword>
<comment type="function">
    <text evidence="2">Snake venom phospholipase A2 (PLA2) that shows high lipolytic (1048 umol/mg/min) and weak ADP-induced platelet aggregation activities. Also shows weak anticoagulant activity (IC(50) is less than 1.0 uM). PLA2 catalyzes the calcium-dependent hydrolysis of the 2-acyl groups in 3-sn-phosphoglycerides.</text>
</comment>
<comment type="catalytic activity">
    <reaction evidence="2">
        <text>a 1,2-diacyl-sn-glycero-3-phosphocholine + H2O = a 1-acyl-sn-glycero-3-phosphocholine + a fatty acid + H(+)</text>
        <dbReference type="Rhea" id="RHEA:15801"/>
        <dbReference type="ChEBI" id="CHEBI:15377"/>
        <dbReference type="ChEBI" id="CHEBI:15378"/>
        <dbReference type="ChEBI" id="CHEBI:28868"/>
        <dbReference type="ChEBI" id="CHEBI:57643"/>
        <dbReference type="ChEBI" id="CHEBI:58168"/>
        <dbReference type="EC" id="3.1.1.4"/>
    </reaction>
</comment>
<comment type="cofactor">
    <cofactor evidence="1">
        <name>Ca(2+)</name>
        <dbReference type="ChEBI" id="CHEBI:29108"/>
    </cofactor>
    <text evidence="1">Binds 1 Ca(2+) ion.</text>
</comment>
<comment type="subcellular location">
    <subcellularLocation>
        <location>Secreted</location>
    </subcellularLocation>
</comment>
<comment type="tissue specificity">
    <text>Expressed by the venom gland.</text>
</comment>
<comment type="PTM">
    <text evidence="1">Contains 7 disulfide bonds.</text>
</comment>
<comment type="mass spectrometry"/>
<comment type="miscellaneous">
    <text>The subspecies C.h.atricaudatus mentioned in PubMed:20347857 is currently considered invalid. However, since different origins of specimens explain sequence variations, the specimen origins are indicated under strain in the reference section (in PubMed:20347857, South Carolina to C.h.atricaudatus).</text>
</comment>
<comment type="similarity">
    <text evidence="3">Belongs to the phospholipase A2 family. Group II subfamily. D49 sub-subfamily.</text>
</comment>
<dbReference type="EC" id="3.1.1.4"/>
<dbReference type="GO" id="GO:0005576">
    <property type="term" value="C:extracellular region"/>
    <property type="evidence" value="ECO:0007669"/>
    <property type="project" value="UniProtKB-SubCell"/>
</dbReference>
<dbReference type="GO" id="GO:0046872">
    <property type="term" value="F:metal ion binding"/>
    <property type="evidence" value="ECO:0007669"/>
    <property type="project" value="UniProtKB-KW"/>
</dbReference>
<dbReference type="GO" id="GO:0004623">
    <property type="term" value="F:phospholipase A2 activity"/>
    <property type="evidence" value="ECO:0007669"/>
    <property type="project" value="UniProtKB-EC"/>
</dbReference>
<dbReference type="GO" id="GO:0090729">
    <property type="term" value="F:toxin activity"/>
    <property type="evidence" value="ECO:0007669"/>
    <property type="project" value="UniProtKB-KW"/>
</dbReference>
<dbReference type="GO" id="GO:0016042">
    <property type="term" value="P:lipid catabolic process"/>
    <property type="evidence" value="ECO:0007669"/>
    <property type="project" value="UniProtKB-KW"/>
</dbReference>
<feature type="chain" id="PRO_0000419285" description="Acidic phospholipase CHA-E6a">
    <location>
        <begin position="1"/>
        <end position="23" status="greater than"/>
    </location>
</feature>
<feature type="non-terminal residue">
    <location>
        <position position="23"/>
    </location>
</feature>
<sequence>SLVQFEMMIMEVAKRSGLLWYSA</sequence>